<name>AROK_SYNS9</name>
<proteinExistence type="inferred from homology"/>
<protein>
    <recommendedName>
        <fullName evidence="1">Shikimate kinase</fullName>
        <shortName evidence="1">SK</shortName>
        <ecNumber evidence="1">2.7.1.71</ecNumber>
    </recommendedName>
</protein>
<evidence type="ECO:0000255" key="1">
    <source>
        <dbReference type="HAMAP-Rule" id="MF_00109"/>
    </source>
</evidence>
<accession>Q3B009</accession>
<comment type="function">
    <text evidence="1">Catalyzes the specific phosphorylation of the 3-hydroxyl group of shikimic acid using ATP as a cosubstrate.</text>
</comment>
<comment type="catalytic activity">
    <reaction evidence="1">
        <text>shikimate + ATP = 3-phosphoshikimate + ADP + H(+)</text>
        <dbReference type="Rhea" id="RHEA:13121"/>
        <dbReference type="ChEBI" id="CHEBI:15378"/>
        <dbReference type="ChEBI" id="CHEBI:30616"/>
        <dbReference type="ChEBI" id="CHEBI:36208"/>
        <dbReference type="ChEBI" id="CHEBI:145989"/>
        <dbReference type="ChEBI" id="CHEBI:456216"/>
        <dbReference type="EC" id="2.7.1.71"/>
    </reaction>
</comment>
<comment type="cofactor">
    <cofactor evidence="1">
        <name>Mg(2+)</name>
        <dbReference type="ChEBI" id="CHEBI:18420"/>
    </cofactor>
    <text evidence="1">Binds 1 Mg(2+) ion per subunit.</text>
</comment>
<comment type="pathway">
    <text evidence="1">Metabolic intermediate biosynthesis; chorismate biosynthesis; chorismate from D-erythrose 4-phosphate and phosphoenolpyruvate: step 5/7.</text>
</comment>
<comment type="subunit">
    <text evidence="1">Monomer.</text>
</comment>
<comment type="subcellular location">
    <subcellularLocation>
        <location evidence="1">Cytoplasm</location>
    </subcellularLocation>
</comment>
<comment type="similarity">
    <text evidence="1">Belongs to the shikimate kinase family.</text>
</comment>
<dbReference type="EC" id="2.7.1.71" evidence="1"/>
<dbReference type="EMBL" id="CP000097">
    <property type="protein sequence ID" value="ABB25318.1"/>
    <property type="molecule type" value="Genomic_DNA"/>
</dbReference>
<dbReference type="RefSeq" id="WP_011359175.1">
    <property type="nucleotide sequence ID" value="NC_007513.1"/>
</dbReference>
<dbReference type="SMR" id="Q3B009"/>
<dbReference type="STRING" id="316279.Syncc9902_0346"/>
<dbReference type="KEGG" id="sye:Syncc9902_0346"/>
<dbReference type="eggNOG" id="COG0703">
    <property type="taxonomic scope" value="Bacteria"/>
</dbReference>
<dbReference type="HOGENOM" id="CLU_057607_2_3_3"/>
<dbReference type="OrthoDB" id="9800332at2"/>
<dbReference type="UniPathway" id="UPA00053">
    <property type="reaction ID" value="UER00088"/>
</dbReference>
<dbReference type="Proteomes" id="UP000002712">
    <property type="component" value="Chromosome"/>
</dbReference>
<dbReference type="GO" id="GO:0005829">
    <property type="term" value="C:cytosol"/>
    <property type="evidence" value="ECO:0007669"/>
    <property type="project" value="TreeGrafter"/>
</dbReference>
<dbReference type="GO" id="GO:0005524">
    <property type="term" value="F:ATP binding"/>
    <property type="evidence" value="ECO:0007669"/>
    <property type="project" value="UniProtKB-UniRule"/>
</dbReference>
<dbReference type="GO" id="GO:0000287">
    <property type="term" value="F:magnesium ion binding"/>
    <property type="evidence" value="ECO:0007669"/>
    <property type="project" value="UniProtKB-UniRule"/>
</dbReference>
<dbReference type="GO" id="GO:0004765">
    <property type="term" value="F:shikimate kinase activity"/>
    <property type="evidence" value="ECO:0007669"/>
    <property type="project" value="UniProtKB-UniRule"/>
</dbReference>
<dbReference type="GO" id="GO:0008652">
    <property type="term" value="P:amino acid biosynthetic process"/>
    <property type="evidence" value="ECO:0007669"/>
    <property type="project" value="UniProtKB-KW"/>
</dbReference>
<dbReference type="GO" id="GO:0009073">
    <property type="term" value="P:aromatic amino acid family biosynthetic process"/>
    <property type="evidence" value="ECO:0007669"/>
    <property type="project" value="UniProtKB-KW"/>
</dbReference>
<dbReference type="GO" id="GO:0009423">
    <property type="term" value="P:chorismate biosynthetic process"/>
    <property type="evidence" value="ECO:0007669"/>
    <property type="project" value="UniProtKB-UniRule"/>
</dbReference>
<dbReference type="CDD" id="cd00464">
    <property type="entry name" value="SK"/>
    <property type="match status" value="1"/>
</dbReference>
<dbReference type="Gene3D" id="3.40.50.300">
    <property type="entry name" value="P-loop containing nucleotide triphosphate hydrolases"/>
    <property type="match status" value="1"/>
</dbReference>
<dbReference type="HAMAP" id="MF_00109">
    <property type="entry name" value="Shikimate_kinase"/>
    <property type="match status" value="1"/>
</dbReference>
<dbReference type="InterPro" id="IPR027417">
    <property type="entry name" value="P-loop_NTPase"/>
</dbReference>
<dbReference type="InterPro" id="IPR031322">
    <property type="entry name" value="Shikimate/glucono_kinase"/>
</dbReference>
<dbReference type="InterPro" id="IPR000623">
    <property type="entry name" value="Shikimate_kinase/TSH1"/>
</dbReference>
<dbReference type="InterPro" id="IPR023000">
    <property type="entry name" value="Shikimate_kinase_CS"/>
</dbReference>
<dbReference type="PANTHER" id="PTHR21087">
    <property type="entry name" value="SHIKIMATE KINASE"/>
    <property type="match status" value="1"/>
</dbReference>
<dbReference type="PANTHER" id="PTHR21087:SF16">
    <property type="entry name" value="SHIKIMATE KINASE 1, CHLOROPLASTIC"/>
    <property type="match status" value="1"/>
</dbReference>
<dbReference type="Pfam" id="PF01202">
    <property type="entry name" value="SKI"/>
    <property type="match status" value="1"/>
</dbReference>
<dbReference type="PRINTS" id="PR01100">
    <property type="entry name" value="SHIKIMTKNASE"/>
</dbReference>
<dbReference type="SUPFAM" id="SSF52540">
    <property type="entry name" value="P-loop containing nucleoside triphosphate hydrolases"/>
    <property type="match status" value="1"/>
</dbReference>
<dbReference type="PROSITE" id="PS01128">
    <property type="entry name" value="SHIKIMATE_KINASE"/>
    <property type="match status" value="1"/>
</dbReference>
<organism>
    <name type="scientific">Synechococcus sp. (strain CC9902)</name>
    <dbReference type="NCBI Taxonomy" id="316279"/>
    <lineage>
        <taxon>Bacteria</taxon>
        <taxon>Bacillati</taxon>
        <taxon>Cyanobacteriota</taxon>
        <taxon>Cyanophyceae</taxon>
        <taxon>Synechococcales</taxon>
        <taxon>Synechococcaceae</taxon>
        <taxon>Synechococcus</taxon>
    </lineage>
</organism>
<gene>
    <name evidence="1" type="primary">aroK</name>
    <name type="ordered locus">Syncc9902_0346</name>
</gene>
<reference key="1">
    <citation type="submission" date="2005-08" db="EMBL/GenBank/DDBJ databases">
        <title>Complete sequence of Synechococcus sp. CC9902.</title>
        <authorList>
            <person name="Copeland A."/>
            <person name="Lucas S."/>
            <person name="Lapidus A."/>
            <person name="Barry K."/>
            <person name="Detter J.C."/>
            <person name="Glavina T."/>
            <person name="Hammon N."/>
            <person name="Israni S."/>
            <person name="Pitluck S."/>
            <person name="Martinez M."/>
            <person name="Schmutz J."/>
            <person name="Larimer F."/>
            <person name="Land M."/>
            <person name="Kyrpides N."/>
            <person name="Ivanova N."/>
            <person name="Richardson P."/>
        </authorList>
    </citation>
    <scope>NUCLEOTIDE SEQUENCE [LARGE SCALE GENOMIC DNA]</scope>
    <source>
        <strain>CC9902</strain>
    </source>
</reference>
<feature type="chain" id="PRO_0000237943" description="Shikimate kinase">
    <location>
        <begin position="1"/>
        <end position="191"/>
    </location>
</feature>
<feature type="binding site" evidence="1">
    <location>
        <begin position="24"/>
        <end position="29"/>
    </location>
    <ligand>
        <name>ATP</name>
        <dbReference type="ChEBI" id="CHEBI:30616"/>
    </ligand>
</feature>
<feature type="binding site" evidence="1">
    <location>
        <position position="28"/>
    </location>
    <ligand>
        <name>Mg(2+)</name>
        <dbReference type="ChEBI" id="CHEBI:18420"/>
    </ligand>
</feature>
<feature type="binding site" evidence="1">
    <location>
        <position position="46"/>
    </location>
    <ligand>
        <name>substrate</name>
    </ligand>
</feature>
<feature type="binding site" evidence="1">
    <location>
        <position position="70"/>
    </location>
    <ligand>
        <name>substrate</name>
    </ligand>
</feature>
<feature type="binding site" evidence="1">
    <location>
        <position position="92"/>
    </location>
    <ligand>
        <name>substrate</name>
    </ligand>
</feature>
<feature type="binding site" evidence="1">
    <location>
        <position position="130"/>
    </location>
    <ligand>
        <name>ATP</name>
        <dbReference type="ChEBI" id="CHEBI:30616"/>
    </ligand>
</feature>
<feature type="binding site" evidence="1">
    <location>
        <position position="149"/>
    </location>
    <ligand>
        <name>substrate</name>
    </ligand>
</feature>
<keyword id="KW-0028">Amino-acid biosynthesis</keyword>
<keyword id="KW-0057">Aromatic amino acid biosynthesis</keyword>
<keyword id="KW-0067">ATP-binding</keyword>
<keyword id="KW-0963">Cytoplasm</keyword>
<keyword id="KW-0418">Kinase</keyword>
<keyword id="KW-0460">Magnesium</keyword>
<keyword id="KW-0479">Metal-binding</keyword>
<keyword id="KW-0547">Nucleotide-binding</keyword>
<keyword id="KW-1185">Reference proteome</keyword>
<keyword id="KW-0808">Transferase</keyword>
<sequence>MTDPILSLKERLSGRSIYLIGMMGSGKTSTGRPLAKRLGYGFVDADAVIEQVAGCTIPEIFERDGEAGFRSIESQVLNAISQRHSLVVATGGGVVTKPENWGQLHSGIVVWLDVNRAQLIERLRDDSTQRPLLQQPNPEAALDTLLQERRPLYGEADLTVVIKDESPDAVADGILQLLPTLIKDPTEQRER</sequence>